<dbReference type="EC" id="4.3.2.1" evidence="1"/>
<dbReference type="EMBL" id="FM209186">
    <property type="protein sequence ID" value="CAW30411.1"/>
    <property type="molecule type" value="Genomic_DNA"/>
</dbReference>
<dbReference type="RefSeq" id="WP_012614673.1">
    <property type="nucleotide sequence ID" value="NC_011770.1"/>
</dbReference>
<dbReference type="SMR" id="B7V5F3"/>
<dbReference type="KEGG" id="pag:PLES_56571"/>
<dbReference type="HOGENOM" id="CLU_027272_2_3_6"/>
<dbReference type="UniPathway" id="UPA00068">
    <property type="reaction ID" value="UER00114"/>
</dbReference>
<dbReference type="GO" id="GO:0005829">
    <property type="term" value="C:cytosol"/>
    <property type="evidence" value="ECO:0007669"/>
    <property type="project" value="TreeGrafter"/>
</dbReference>
<dbReference type="GO" id="GO:0004056">
    <property type="term" value="F:argininosuccinate lyase activity"/>
    <property type="evidence" value="ECO:0007669"/>
    <property type="project" value="UniProtKB-UniRule"/>
</dbReference>
<dbReference type="GO" id="GO:0042450">
    <property type="term" value="P:arginine biosynthetic process via ornithine"/>
    <property type="evidence" value="ECO:0007669"/>
    <property type="project" value="InterPro"/>
</dbReference>
<dbReference type="GO" id="GO:0006526">
    <property type="term" value="P:L-arginine biosynthetic process"/>
    <property type="evidence" value="ECO:0007669"/>
    <property type="project" value="UniProtKB-UniRule"/>
</dbReference>
<dbReference type="CDD" id="cd01359">
    <property type="entry name" value="Argininosuccinate_lyase"/>
    <property type="match status" value="1"/>
</dbReference>
<dbReference type="FunFam" id="1.10.275.10:FF:000002">
    <property type="entry name" value="Argininosuccinate lyase"/>
    <property type="match status" value="1"/>
</dbReference>
<dbReference type="FunFam" id="1.10.40.30:FF:000001">
    <property type="entry name" value="Argininosuccinate lyase"/>
    <property type="match status" value="1"/>
</dbReference>
<dbReference type="FunFam" id="1.20.200.10:FF:000015">
    <property type="entry name" value="argininosuccinate lyase isoform X2"/>
    <property type="match status" value="1"/>
</dbReference>
<dbReference type="Gene3D" id="1.10.40.30">
    <property type="entry name" value="Fumarase/aspartase (C-terminal domain)"/>
    <property type="match status" value="1"/>
</dbReference>
<dbReference type="Gene3D" id="1.20.200.10">
    <property type="entry name" value="Fumarase/aspartase (Central domain)"/>
    <property type="match status" value="1"/>
</dbReference>
<dbReference type="Gene3D" id="1.10.275.10">
    <property type="entry name" value="Fumarase/aspartase (N-terminal domain)"/>
    <property type="match status" value="1"/>
</dbReference>
<dbReference type="HAMAP" id="MF_00006">
    <property type="entry name" value="Arg_succ_lyase"/>
    <property type="match status" value="1"/>
</dbReference>
<dbReference type="InterPro" id="IPR029419">
    <property type="entry name" value="Arg_succ_lyase_C"/>
</dbReference>
<dbReference type="InterPro" id="IPR009049">
    <property type="entry name" value="Argininosuccinate_lyase"/>
</dbReference>
<dbReference type="InterPro" id="IPR024083">
    <property type="entry name" value="Fumarase/histidase_N"/>
</dbReference>
<dbReference type="InterPro" id="IPR020557">
    <property type="entry name" value="Fumarate_lyase_CS"/>
</dbReference>
<dbReference type="InterPro" id="IPR000362">
    <property type="entry name" value="Fumarate_lyase_fam"/>
</dbReference>
<dbReference type="InterPro" id="IPR022761">
    <property type="entry name" value="Fumarate_lyase_N"/>
</dbReference>
<dbReference type="InterPro" id="IPR008948">
    <property type="entry name" value="L-Aspartase-like"/>
</dbReference>
<dbReference type="NCBIfam" id="TIGR00838">
    <property type="entry name" value="argH"/>
    <property type="match status" value="1"/>
</dbReference>
<dbReference type="PANTHER" id="PTHR43814">
    <property type="entry name" value="ARGININOSUCCINATE LYASE"/>
    <property type="match status" value="1"/>
</dbReference>
<dbReference type="PANTHER" id="PTHR43814:SF1">
    <property type="entry name" value="ARGININOSUCCINATE LYASE"/>
    <property type="match status" value="1"/>
</dbReference>
<dbReference type="Pfam" id="PF14698">
    <property type="entry name" value="ASL_C2"/>
    <property type="match status" value="1"/>
</dbReference>
<dbReference type="Pfam" id="PF00206">
    <property type="entry name" value="Lyase_1"/>
    <property type="match status" value="1"/>
</dbReference>
<dbReference type="PRINTS" id="PR00145">
    <property type="entry name" value="ARGSUCLYASE"/>
</dbReference>
<dbReference type="PRINTS" id="PR00149">
    <property type="entry name" value="FUMRATELYASE"/>
</dbReference>
<dbReference type="SUPFAM" id="SSF48557">
    <property type="entry name" value="L-aspartase-like"/>
    <property type="match status" value="1"/>
</dbReference>
<dbReference type="PROSITE" id="PS00163">
    <property type="entry name" value="FUMARATE_LYASES"/>
    <property type="match status" value="1"/>
</dbReference>
<gene>
    <name evidence="1" type="primary">argH</name>
    <name type="ordered locus">PLES_56571</name>
</gene>
<proteinExistence type="inferred from homology"/>
<accession>B7V5F3</accession>
<evidence type="ECO:0000255" key="1">
    <source>
        <dbReference type="HAMAP-Rule" id="MF_00006"/>
    </source>
</evidence>
<sequence>MSVEKTNQSWGGRFSEPVDAFVARFTASVDFDKRLYRHDIMGSIAHATMLAKVGVLSDAERDAIIDGLQQIQAEIEAGSFDWRVDLEDVHMNIEARLTDRIGVTGKKLHTGRSRNDQVATDIRLWLRDEIDTILAEITRLQEGLLGLAEAEADTIMPGFTHLQTAQPVTFGHHLLAWFEMLGRDYERLVDCRKRVNRMPLGSAALAGTTYPIQREITCQLLGFDAVGGNSLDGVSDRDFAIEFCAAASLAMMHLSRFSEELVLWTSAQFQFIDLPDRFCTGSSIMPQKKNPDVPELVRGKSGRVFGALTGLLTLMKGQPLAYNKDNQEDKEPLFDTADTLHDSLRAFADMVPAIRPRREIMREAARRGFSTATDLADYLVRKGLPFRDCHEIVGHAVKYGVDSGKDLAEMSLDELRRFSEQIDADVFDVLTLEGSVNARDHIGGTAPNQVRAAVARGRKLLAQR</sequence>
<comment type="catalytic activity">
    <reaction evidence="1">
        <text>2-(N(omega)-L-arginino)succinate = fumarate + L-arginine</text>
        <dbReference type="Rhea" id="RHEA:24020"/>
        <dbReference type="ChEBI" id="CHEBI:29806"/>
        <dbReference type="ChEBI" id="CHEBI:32682"/>
        <dbReference type="ChEBI" id="CHEBI:57472"/>
        <dbReference type="EC" id="4.3.2.1"/>
    </reaction>
</comment>
<comment type="pathway">
    <text evidence="1">Amino-acid biosynthesis; L-arginine biosynthesis; L-arginine from L-ornithine and carbamoyl phosphate: step 3/3.</text>
</comment>
<comment type="subcellular location">
    <subcellularLocation>
        <location evidence="1">Cytoplasm</location>
    </subcellularLocation>
</comment>
<comment type="similarity">
    <text evidence="1">Belongs to the lyase 1 family. Argininosuccinate lyase subfamily.</text>
</comment>
<organism>
    <name type="scientific">Pseudomonas aeruginosa (strain LESB58)</name>
    <dbReference type="NCBI Taxonomy" id="557722"/>
    <lineage>
        <taxon>Bacteria</taxon>
        <taxon>Pseudomonadati</taxon>
        <taxon>Pseudomonadota</taxon>
        <taxon>Gammaproteobacteria</taxon>
        <taxon>Pseudomonadales</taxon>
        <taxon>Pseudomonadaceae</taxon>
        <taxon>Pseudomonas</taxon>
    </lineage>
</organism>
<reference key="1">
    <citation type="journal article" date="2009" name="Genome Res.">
        <title>Newly introduced genomic prophage islands are critical determinants of in vivo competitiveness in the Liverpool epidemic strain of Pseudomonas aeruginosa.</title>
        <authorList>
            <person name="Winstanley C."/>
            <person name="Langille M.G.I."/>
            <person name="Fothergill J.L."/>
            <person name="Kukavica-Ibrulj I."/>
            <person name="Paradis-Bleau C."/>
            <person name="Sanschagrin F."/>
            <person name="Thomson N.R."/>
            <person name="Winsor G.L."/>
            <person name="Quail M.A."/>
            <person name="Lennard N."/>
            <person name="Bignell A."/>
            <person name="Clarke L."/>
            <person name="Seeger K."/>
            <person name="Saunders D."/>
            <person name="Harris D."/>
            <person name="Parkhill J."/>
            <person name="Hancock R.E.W."/>
            <person name="Brinkman F.S.L."/>
            <person name="Levesque R.C."/>
        </authorList>
    </citation>
    <scope>NUCLEOTIDE SEQUENCE [LARGE SCALE GENOMIC DNA]</scope>
    <source>
        <strain>LESB58</strain>
    </source>
</reference>
<feature type="chain" id="PRO_1000116210" description="Argininosuccinate lyase">
    <location>
        <begin position="1"/>
        <end position="464"/>
    </location>
</feature>
<protein>
    <recommendedName>
        <fullName evidence="1">Argininosuccinate lyase</fullName>
        <shortName evidence="1">ASAL</shortName>
        <ecNumber evidence="1">4.3.2.1</ecNumber>
    </recommendedName>
    <alternativeName>
        <fullName evidence="1">Arginosuccinase</fullName>
    </alternativeName>
</protein>
<keyword id="KW-0028">Amino-acid biosynthesis</keyword>
<keyword id="KW-0055">Arginine biosynthesis</keyword>
<keyword id="KW-0963">Cytoplasm</keyword>
<keyword id="KW-0456">Lyase</keyword>
<name>ARLY_PSEA8</name>